<proteinExistence type="inferred from homology"/>
<organism>
    <name type="scientific">Escherichia coli (strain 55989 / EAEC)</name>
    <dbReference type="NCBI Taxonomy" id="585055"/>
    <lineage>
        <taxon>Bacteria</taxon>
        <taxon>Pseudomonadati</taxon>
        <taxon>Pseudomonadota</taxon>
        <taxon>Gammaproteobacteria</taxon>
        <taxon>Enterobacterales</taxon>
        <taxon>Enterobacteriaceae</taxon>
        <taxon>Escherichia</taxon>
    </lineage>
</organism>
<protein>
    <recommendedName>
        <fullName evidence="1">H(+)/Cl(-) exchange transporter ClcA</fullName>
    </recommendedName>
</protein>
<accession>B7LGL7</accession>
<feature type="chain" id="PRO_1000164070" description="H(+)/Cl(-) exchange transporter ClcA">
    <location>
        <begin position="1"/>
        <end position="473"/>
    </location>
</feature>
<feature type="topological domain" description="Cytoplasmic" evidence="1">
    <location>
        <begin position="1"/>
        <end position="32"/>
    </location>
</feature>
<feature type="transmembrane region" description="Helical" evidence="1">
    <location>
        <begin position="33"/>
        <end position="69"/>
    </location>
</feature>
<feature type="topological domain" description="Periplasmic" evidence="1">
    <location>
        <begin position="70"/>
        <end position="76"/>
    </location>
</feature>
<feature type="transmembrane region" description="Helical" evidence="1">
    <location>
        <begin position="77"/>
        <end position="100"/>
    </location>
</feature>
<feature type="intramembrane region" description="Helical" evidence="1">
    <location>
        <begin position="109"/>
        <end position="116"/>
    </location>
</feature>
<feature type="topological domain" description="Cytoplasmic" evidence="1">
    <location>
        <begin position="117"/>
        <end position="123"/>
    </location>
</feature>
<feature type="transmembrane region" description="Helical" evidence="1">
    <location>
        <begin position="124"/>
        <end position="141"/>
    </location>
</feature>
<feature type="transmembrane region" description="Helical" evidence="1">
    <location>
        <begin position="148"/>
        <end position="166"/>
    </location>
</feature>
<feature type="topological domain" description="Cytoplasmic" evidence="1">
    <location>
        <begin position="167"/>
        <end position="176"/>
    </location>
</feature>
<feature type="intramembrane region" description="Helical" evidence="1">
    <location>
        <begin position="177"/>
        <end position="189"/>
    </location>
</feature>
<feature type="intramembrane region" description="Helical" evidence="1">
    <location>
        <begin position="193"/>
        <end position="201"/>
    </location>
</feature>
<feature type="topological domain" description="Cytoplasmic" evidence="1">
    <location>
        <begin position="202"/>
        <end position="214"/>
    </location>
</feature>
<feature type="transmembrane region" description="Helical" evidence="1">
    <location>
        <begin position="215"/>
        <end position="232"/>
    </location>
</feature>
<feature type="topological domain" description="Periplasmic" evidence="1">
    <location>
        <begin position="233"/>
        <end position="252"/>
    </location>
</feature>
<feature type="transmembrane region" description="Helical" evidence="1">
    <location>
        <begin position="253"/>
        <end position="281"/>
    </location>
</feature>
<feature type="topological domain" description="Cytoplasmic" evidence="1">
    <location>
        <begin position="282"/>
        <end position="287"/>
    </location>
</feature>
<feature type="transmembrane region" description="Helical" evidence="1">
    <location>
        <begin position="288"/>
        <end position="309"/>
    </location>
</feature>
<feature type="topological domain" description="Periplasmic" evidence="1">
    <location>
        <begin position="310"/>
        <end position="329"/>
    </location>
</feature>
<feature type="transmembrane region" description="Helical" evidence="1">
    <location>
        <begin position="330"/>
        <end position="349"/>
    </location>
</feature>
<feature type="transmembrane region" description="Helical" evidence="1">
    <location>
        <begin position="355"/>
        <end position="376"/>
    </location>
</feature>
<feature type="topological domain" description="Periplasmic" evidence="1">
    <location>
        <begin position="377"/>
        <end position="386"/>
    </location>
</feature>
<feature type="intramembrane region" description="Helical" evidence="1">
    <location>
        <begin position="387"/>
        <end position="401"/>
    </location>
</feature>
<feature type="intramembrane region" description="Note=Loop between two helices" evidence="1">
    <location>
        <begin position="402"/>
        <end position="404"/>
    </location>
</feature>
<feature type="intramembrane region" description="Helical" evidence="1">
    <location>
        <begin position="405"/>
        <end position="416"/>
    </location>
</feature>
<feature type="intramembrane region" description="Note=Loop between two helices" evidence="1">
    <location>
        <begin position="417"/>
        <end position="421"/>
    </location>
</feature>
<feature type="transmembrane region" description="Helical" evidence="1">
    <location>
        <begin position="422"/>
        <end position="438"/>
    </location>
</feature>
<feature type="topological domain" description="Cytoplasmic" evidence="1">
    <location>
        <begin position="439"/>
        <end position="473"/>
    </location>
</feature>
<feature type="short sequence motif" description="Selectivity filter part_1" evidence="1">
    <location>
        <begin position="106"/>
        <end position="110"/>
    </location>
</feature>
<feature type="short sequence motif" description="Selectivity filter part_2" evidence="1">
    <location>
        <begin position="146"/>
        <end position="150"/>
    </location>
</feature>
<feature type="short sequence motif" description="Selectivity filter part_3" evidence="1">
    <location>
        <begin position="355"/>
        <end position="359"/>
    </location>
</feature>
<feature type="binding site" evidence="1">
    <location>
        <position position="107"/>
    </location>
    <ligand>
        <name>chloride</name>
        <dbReference type="ChEBI" id="CHEBI:17996"/>
    </ligand>
</feature>
<feature type="binding site" evidence="1">
    <location>
        <position position="356"/>
    </location>
    <ligand>
        <name>chloride</name>
        <dbReference type="ChEBI" id="CHEBI:17996"/>
    </ligand>
</feature>
<feature type="binding site" evidence="1">
    <location>
        <position position="357"/>
    </location>
    <ligand>
        <name>chloride</name>
        <dbReference type="ChEBI" id="CHEBI:17996"/>
    </ligand>
</feature>
<feature type="binding site" evidence="1">
    <location>
        <position position="445"/>
    </location>
    <ligand>
        <name>chloride</name>
        <dbReference type="ChEBI" id="CHEBI:17996"/>
    </ligand>
</feature>
<feature type="site" description="Mediates proton transfer from the outer aqueous phase to the interior of the protein; involved in linking H(+) and Cl(-) transport" evidence="1">
    <location>
        <position position="148"/>
    </location>
</feature>
<feature type="site" description="Mediates proton transfer from the protein to the inner aqueous phase" evidence="1">
    <location>
        <position position="203"/>
    </location>
</feature>
<sequence>MKTDTPSLETPQAARLRRRQLIRQLLERDKTPLAILFMAAVVGTLVGLAAVAFDKGVAWLQNQRMGALVHTADNYPLLLTVAFLCSAVLAMFGYFLVRKYAPEAGGSGIPEIEGALEDQRPVRWWRVLPVKFFGGLGTLGGGMVLGREGPTVQIGGNIGRMVLDIFRLKGDEARHTLLATGAAAGLAAAFNAPLAGILFIIEEMRPQFRYTLISIKAVFIGVIMSTIMYRIFNHEVALIDVGKLSDAPLNTLWLYLILGIIFGIFGPIFNKWVLGMQDLLHRVHGGNITKWVLMGGAIGGLCGLLGFVAPATSGGGFNLIPIATAGNFSMGMLVFIFVARVITTLLCFSSGAPGGIFAPMLALGTVLGTAFGMVAVELFPQYHLEAGTFAIAGMGALLAASIRAPLTGIILVLEMTDNYQLILPMIITGLGATLLAQFTGGKPLYSAILARTLAKQEAEQLARSKAASASENT</sequence>
<reference key="1">
    <citation type="journal article" date="2009" name="PLoS Genet.">
        <title>Organised genome dynamics in the Escherichia coli species results in highly diverse adaptive paths.</title>
        <authorList>
            <person name="Touchon M."/>
            <person name="Hoede C."/>
            <person name="Tenaillon O."/>
            <person name="Barbe V."/>
            <person name="Baeriswyl S."/>
            <person name="Bidet P."/>
            <person name="Bingen E."/>
            <person name="Bonacorsi S."/>
            <person name="Bouchier C."/>
            <person name="Bouvet O."/>
            <person name="Calteau A."/>
            <person name="Chiapello H."/>
            <person name="Clermont O."/>
            <person name="Cruveiller S."/>
            <person name="Danchin A."/>
            <person name="Diard M."/>
            <person name="Dossat C."/>
            <person name="Karoui M.E."/>
            <person name="Frapy E."/>
            <person name="Garry L."/>
            <person name="Ghigo J.M."/>
            <person name="Gilles A.M."/>
            <person name="Johnson J."/>
            <person name="Le Bouguenec C."/>
            <person name="Lescat M."/>
            <person name="Mangenot S."/>
            <person name="Martinez-Jehanne V."/>
            <person name="Matic I."/>
            <person name="Nassif X."/>
            <person name="Oztas S."/>
            <person name="Petit M.A."/>
            <person name="Pichon C."/>
            <person name="Rouy Z."/>
            <person name="Ruf C.S."/>
            <person name="Schneider D."/>
            <person name="Tourret J."/>
            <person name="Vacherie B."/>
            <person name="Vallenet D."/>
            <person name="Medigue C."/>
            <person name="Rocha E.P.C."/>
            <person name="Denamur E."/>
        </authorList>
    </citation>
    <scope>NUCLEOTIDE SEQUENCE [LARGE SCALE GENOMIC DNA]</scope>
    <source>
        <strain>55989 / EAEC</strain>
    </source>
</reference>
<evidence type="ECO:0000255" key="1">
    <source>
        <dbReference type="HAMAP-Rule" id="MF_01128"/>
    </source>
</evidence>
<dbReference type="EMBL" id="CU928145">
    <property type="protein sequence ID" value="CAU96036.1"/>
    <property type="molecule type" value="Genomic_DNA"/>
</dbReference>
<dbReference type="RefSeq" id="WP_000845394.1">
    <property type="nucleotide sequence ID" value="NC_011748.1"/>
</dbReference>
<dbReference type="SMR" id="B7LGL7"/>
<dbReference type="GeneID" id="93777272"/>
<dbReference type="KEGG" id="eck:EC55989_0149"/>
<dbReference type="HOGENOM" id="CLU_015263_7_0_6"/>
<dbReference type="Proteomes" id="UP000000746">
    <property type="component" value="Chromosome"/>
</dbReference>
<dbReference type="GO" id="GO:0005886">
    <property type="term" value="C:plasma membrane"/>
    <property type="evidence" value="ECO:0007669"/>
    <property type="project" value="UniProtKB-SubCell"/>
</dbReference>
<dbReference type="GO" id="GO:0015297">
    <property type="term" value="F:antiporter activity"/>
    <property type="evidence" value="ECO:0007669"/>
    <property type="project" value="UniProtKB-UniRule"/>
</dbReference>
<dbReference type="GO" id="GO:0005247">
    <property type="term" value="F:voltage-gated chloride channel activity"/>
    <property type="evidence" value="ECO:0007669"/>
    <property type="project" value="TreeGrafter"/>
</dbReference>
<dbReference type="CDD" id="cd01031">
    <property type="entry name" value="EriC"/>
    <property type="match status" value="1"/>
</dbReference>
<dbReference type="FunFam" id="1.10.3080.10:FF:000005">
    <property type="entry name" value="H(+)/Cl(-) exchange transporter ClcA"/>
    <property type="match status" value="1"/>
</dbReference>
<dbReference type="Gene3D" id="1.10.3080.10">
    <property type="entry name" value="Clc chloride channel"/>
    <property type="match status" value="1"/>
</dbReference>
<dbReference type="HAMAP" id="MF_01128">
    <property type="entry name" value="CLC_ClcA"/>
    <property type="match status" value="1"/>
</dbReference>
<dbReference type="InterPro" id="IPR023861">
    <property type="entry name" value="Cl-channel_ClcA"/>
</dbReference>
<dbReference type="InterPro" id="IPR014743">
    <property type="entry name" value="Cl-channel_core"/>
</dbReference>
<dbReference type="InterPro" id="IPR001807">
    <property type="entry name" value="ClC"/>
</dbReference>
<dbReference type="NCBIfam" id="NF003640">
    <property type="entry name" value="PRK05277.1"/>
    <property type="match status" value="1"/>
</dbReference>
<dbReference type="PANTHER" id="PTHR45711">
    <property type="entry name" value="CHLORIDE CHANNEL PROTEIN"/>
    <property type="match status" value="1"/>
</dbReference>
<dbReference type="PANTHER" id="PTHR45711:SF6">
    <property type="entry name" value="CHLORIDE CHANNEL PROTEIN"/>
    <property type="match status" value="1"/>
</dbReference>
<dbReference type="Pfam" id="PF00654">
    <property type="entry name" value="Voltage_CLC"/>
    <property type="match status" value="1"/>
</dbReference>
<dbReference type="PRINTS" id="PR00762">
    <property type="entry name" value="CLCHANNEL"/>
</dbReference>
<dbReference type="SUPFAM" id="SSF81340">
    <property type="entry name" value="Clc chloride channel"/>
    <property type="match status" value="1"/>
</dbReference>
<gene>
    <name evidence="1" type="primary">clcA</name>
    <name evidence="1" type="synonym">eriC</name>
    <name type="ordered locus">EC55989_0149</name>
</gene>
<keyword id="KW-0050">Antiport</keyword>
<keyword id="KW-0997">Cell inner membrane</keyword>
<keyword id="KW-1003">Cell membrane</keyword>
<keyword id="KW-0868">Chloride</keyword>
<keyword id="KW-0406">Ion transport</keyword>
<keyword id="KW-0472">Membrane</keyword>
<keyword id="KW-1185">Reference proteome</keyword>
<keyword id="KW-0812">Transmembrane</keyword>
<keyword id="KW-1133">Transmembrane helix</keyword>
<keyword id="KW-0813">Transport</keyword>
<name>CLCA_ECO55</name>
<comment type="function">
    <text evidence="1">Proton-coupled chloride transporter. Functions as antiport system and exchanges two chloride ions for 1 proton. Probably acts as an electrical shunt for an outwardly-directed proton pump that is linked to amino acid decarboxylation, as part of the extreme acid resistance (XAR) response.</text>
</comment>
<comment type="catalytic activity">
    <reaction evidence="1">
        <text>2 chloride(in) + H(+)(out) = 2 chloride(out) + H(+)(in)</text>
        <dbReference type="Rhea" id="RHEA:29567"/>
        <dbReference type="ChEBI" id="CHEBI:15378"/>
        <dbReference type="ChEBI" id="CHEBI:17996"/>
    </reaction>
</comment>
<comment type="subunit">
    <text evidence="1">Homodimer.</text>
</comment>
<comment type="subcellular location">
    <subcellularLocation>
        <location evidence="1">Cell inner membrane</location>
        <topology evidence="1">Multi-pass membrane protein</topology>
    </subcellularLocation>
</comment>
<comment type="similarity">
    <text evidence="1">Belongs to the chloride channel (TC 2.A.49) family. ClcA subfamily.</text>
</comment>